<comment type="function">
    <text evidence="2">Catalyzes the ATP- and formate-dependent formylation of 5-aminoimidazole-4-carboxamide-1-beta-d-ribofuranosyl 5'-monophosphate (AICAR) to 5-formaminoimidazole-4-carboxamide-1-beta-d-ribofuranosyl 5'-monophosphate (FAICAR) in the absence of folates.</text>
</comment>
<comment type="catalytic activity">
    <reaction evidence="2">
        <text>5-amino-1-(5-phospho-beta-D-ribosyl)imidazole-4-carboxamide + formate + ATP = 5-formamido-1-(5-phospho-D-ribosyl)imidazole-4-carboxamide + ADP + phosphate</text>
        <dbReference type="Rhea" id="RHEA:24836"/>
        <dbReference type="ChEBI" id="CHEBI:15740"/>
        <dbReference type="ChEBI" id="CHEBI:30616"/>
        <dbReference type="ChEBI" id="CHEBI:43474"/>
        <dbReference type="ChEBI" id="CHEBI:58467"/>
        <dbReference type="ChEBI" id="CHEBI:58475"/>
        <dbReference type="ChEBI" id="CHEBI:456216"/>
        <dbReference type="EC" id="6.3.4.23"/>
    </reaction>
</comment>
<comment type="cofactor">
    <cofactor evidence="1">
        <name>Mg(2+)</name>
        <dbReference type="ChEBI" id="CHEBI:18420"/>
    </cofactor>
    <cofactor evidence="1">
        <name>Mn(2+)</name>
        <dbReference type="ChEBI" id="CHEBI:29035"/>
    </cofactor>
    <text evidence="1">Binds 1 Mg(2+) or Mn(2+) ion per subunit.</text>
</comment>
<comment type="pathway">
    <text evidence="2">Purine metabolism; IMP biosynthesis via de novo pathway; 5-formamido-1-(5-phospho-D-ribosyl)imidazole-4-carboxamide from 5-amino-1-(5-phospho-D-ribosyl)imidazole-4-carboxamide (formate route): step 1/1.</text>
</comment>
<comment type="similarity">
    <text evidence="2">Belongs to the phosphohexose mutase family.</text>
</comment>
<protein>
    <recommendedName>
        <fullName evidence="2">5-formaminoimidazole-4-carboxamide-1-(beta)-D-ribofuranosyl 5'-monophosphate synthetase</fullName>
        <ecNumber evidence="2">6.3.4.23</ecNumber>
    </recommendedName>
    <alternativeName>
        <fullName evidence="2">5-aminoimidazole-4-carboxamide-1-beta-D-ribofuranosyl 5'-monophosphate--formate ligase</fullName>
    </alternativeName>
</protein>
<keyword id="KW-0067">ATP-binding</keyword>
<keyword id="KW-0436">Ligase</keyword>
<keyword id="KW-0460">Magnesium</keyword>
<keyword id="KW-0464">Manganese</keyword>
<keyword id="KW-0479">Metal-binding</keyword>
<keyword id="KW-0547">Nucleotide-binding</keyword>
<keyword id="KW-0658">Purine biosynthesis</keyword>
<keyword id="KW-1185">Reference proteome</keyword>
<reference key="1">
    <citation type="journal article" date="2002" name="Proc. Natl. Acad. Sci. U.S.A.">
        <title>The complete genome of hyperthermophile Methanopyrus kandleri AV19 and monophyly of archaeal methanogens.</title>
        <authorList>
            <person name="Slesarev A.I."/>
            <person name="Mezhevaya K.V."/>
            <person name="Makarova K.S."/>
            <person name="Polushin N.N."/>
            <person name="Shcherbinina O.V."/>
            <person name="Shakhova V.V."/>
            <person name="Belova G.I."/>
            <person name="Aravind L."/>
            <person name="Natale D.A."/>
            <person name="Rogozin I.B."/>
            <person name="Tatusov R.L."/>
            <person name="Wolf Y.I."/>
            <person name="Stetter K.O."/>
            <person name="Malykh A.G."/>
            <person name="Koonin E.V."/>
            <person name="Kozyavkin S.A."/>
        </authorList>
    </citation>
    <scope>NUCLEOTIDE SEQUENCE [LARGE SCALE GENOMIC DNA]</scope>
    <source>
        <strain>AV19 / DSM 6324 / JCM 9639 / NBRC 100938</strain>
    </source>
</reference>
<gene>
    <name evidence="2" type="primary">purP</name>
    <name type="ordered locus">MK0588</name>
</gene>
<organism>
    <name type="scientific">Methanopyrus kandleri (strain AV19 / DSM 6324 / JCM 9639 / NBRC 100938)</name>
    <dbReference type="NCBI Taxonomy" id="190192"/>
    <lineage>
        <taxon>Archaea</taxon>
        <taxon>Methanobacteriati</taxon>
        <taxon>Methanobacteriota</taxon>
        <taxon>Methanomada group</taxon>
        <taxon>Methanopyri</taxon>
        <taxon>Methanopyrales</taxon>
        <taxon>Methanopyraceae</taxon>
        <taxon>Methanopyrus</taxon>
    </lineage>
</organism>
<dbReference type="EC" id="6.3.4.23" evidence="2"/>
<dbReference type="EMBL" id="AE009439">
    <property type="protein sequence ID" value="AAM01803.1"/>
    <property type="molecule type" value="Genomic_DNA"/>
</dbReference>
<dbReference type="RefSeq" id="WP_011018958.1">
    <property type="nucleotide sequence ID" value="NC_003551.1"/>
</dbReference>
<dbReference type="SMR" id="Q8TXS2"/>
<dbReference type="STRING" id="190192.MK0588"/>
<dbReference type="PaxDb" id="190192-MK0588"/>
<dbReference type="EnsemblBacteria" id="AAM01803">
    <property type="protein sequence ID" value="AAM01803"/>
    <property type="gene ID" value="MK0588"/>
</dbReference>
<dbReference type="GeneID" id="1476689"/>
<dbReference type="KEGG" id="mka:MK0588"/>
<dbReference type="PATRIC" id="fig|190192.8.peg.623"/>
<dbReference type="HOGENOM" id="CLU_065084_0_0_2"/>
<dbReference type="InParanoid" id="Q8TXS2"/>
<dbReference type="OrthoDB" id="98133at2157"/>
<dbReference type="UniPathway" id="UPA00074">
    <property type="reaction ID" value="UER00134"/>
</dbReference>
<dbReference type="Proteomes" id="UP000001826">
    <property type="component" value="Chromosome"/>
</dbReference>
<dbReference type="GO" id="GO:0005524">
    <property type="term" value="F:ATP binding"/>
    <property type="evidence" value="ECO:0007669"/>
    <property type="project" value="UniProtKB-KW"/>
</dbReference>
<dbReference type="GO" id="GO:0016879">
    <property type="term" value="F:ligase activity, forming carbon-nitrogen bonds"/>
    <property type="evidence" value="ECO:0007669"/>
    <property type="project" value="UniProtKB-UniRule"/>
</dbReference>
<dbReference type="GO" id="GO:0000287">
    <property type="term" value="F:magnesium ion binding"/>
    <property type="evidence" value="ECO:0007669"/>
    <property type="project" value="InterPro"/>
</dbReference>
<dbReference type="GO" id="GO:0006189">
    <property type="term" value="P:'de novo' IMP biosynthetic process"/>
    <property type="evidence" value="ECO:0007669"/>
    <property type="project" value="UniProtKB-UniRule"/>
</dbReference>
<dbReference type="Gene3D" id="3.40.50.20">
    <property type="match status" value="1"/>
</dbReference>
<dbReference type="Gene3D" id="3.30.1490.20">
    <property type="entry name" value="ATP-grasp fold, A domain"/>
    <property type="match status" value="1"/>
</dbReference>
<dbReference type="Gene3D" id="3.30.470.20">
    <property type="entry name" value="ATP-grasp fold, B domain"/>
    <property type="match status" value="1"/>
</dbReference>
<dbReference type="HAMAP" id="MF_01163">
    <property type="entry name" value="IMP_biosynth_PurP"/>
    <property type="match status" value="1"/>
</dbReference>
<dbReference type="InterPro" id="IPR011761">
    <property type="entry name" value="ATP-grasp"/>
</dbReference>
<dbReference type="InterPro" id="IPR013815">
    <property type="entry name" value="ATP_grasp_subdomain_1"/>
</dbReference>
<dbReference type="InterPro" id="IPR023656">
    <property type="entry name" value="IMP_biosynth_PurP"/>
</dbReference>
<dbReference type="InterPro" id="IPR009720">
    <property type="entry name" value="IMP_biosynth_PurP_C"/>
</dbReference>
<dbReference type="InterPro" id="IPR010672">
    <property type="entry name" value="IMP_biosynth_PurP_N"/>
</dbReference>
<dbReference type="InterPro" id="IPR016185">
    <property type="entry name" value="PreATP-grasp_dom_sf"/>
</dbReference>
<dbReference type="NCBIfam" id="NF009780">
    <property type="entry name" value="PRK13278.1-5"/>
    <property type="match status" value="1"/>
</dbReference>
<dbReference type="PANTHER" id="PTHR38147:SF2">
    <property type="entry name" value="5-FORMAMINOIMIDAZOLE-4-CARBOXAMIDE-1-(BETA)-D-RIBOFURANOSYL 5'-MONOPHOSPHATE SYNTHETASE"/>
    <property type="match status" value="1"/>
</dbReference>
<dbReference type="PANTHER" id="PTHR38147">
    <property type="entry name" value="5-FORMAMINOIMIDAZOLE-4-CARBOXAMIDE-1-(BETA)-D-RIBOFURANOSYL 5'-MONOPHOSPHATE SYNTHETASE-RELATED"/>
    <property type="match status" value="1"/>
</dbReference>
<dbReference type="Pfam" id="PF06849">
    <property type="entry name" value="DUF1246"/>
    <property type="match status" value="1"/>
</dbReference>
<dbReference type="Pfam" id="PF06973">
    <property type="entry name" value="DUF1297"/>
    <property type="match status" value="1"/>
</dbReference>
<dbReference type="PIRSF" id="PIRSF004602">
    <property type="entry name" value="ATPgrasp_PurP"/>
    <property type="match status" value="1"/>
</dbReference>
<dbReference type="SUPFAM" id="SSF56059">
    <property type="entry name" value="Glutathione synthetase ATP-binding domain-like"/>
    <property type="match status" value="1"/>
</dbReference>
<dbReference type="SUPFAM" id="SSF52440">
    <property type="entry name" value="PreATP-grasp domain"/>
    <property type="match status" value="1"/>
</dbReference>
<dbReference type="PROSITE" id="PS50975">
    <property type="entry name" value="ATP_GRASP"/>
    <property type="match status" value="1"/>
</dbReference>
<name>PURP_METKA</name>
<proteinExistence type="inferred from homology"/>
<accession>Q8TXS2</accession>
<feature type="chain" id="PRO_0000148025" description="5-formaminoimidazole-4-carboxamide-1-(beta)-D-ribofuranosyl 5'-monophosphate synthetase">
    <location>
        <begin position="1"/>
        <end position="359"/>
    </location>
</feature>
<feature type="domain" description="ATP-grasp" evidence="2">
    <location>
        <begin position="116"/>
        <end position="340"/>
    </location>
</feature>
<feature type="binding site" evidence="2">
    <location>
        <position position="27"/>
    </location>
    <ligand>
        <name>5-amino-1-(5-phospho-beta-D-ribosyl)imidazole-4-carboxamide</name>
        <dbReference type="ChEBI" id="CHEBI:58475"/>
    </ligand>
</feature>
<feature type="binding site" evidence="2">
    <location>
        <position position="94"/>
    </location>
    <ligand>
        <name>5-amino-1-(5-phospho-beta-D-ribosyl)imidazole-4-carboxamide</name>
        <dbReference type="ChEBI" id="CHEBI:58475"/>
    </ligand>
</feature>
<feature type="binding site" evidence="2">
    <location>
        <begin position="146"/>
        <end position="208"/>
    </location>
    <ligand>
        <name>ATP</name>
        <dbReference type="ChEBI" id="CHEBI:30616"/>
    </ligand>
</feature>
<feature type="binding site" evidence="2">
    <location>
        <position position="230"/>
    </location>
    <ligand>
        <name>ATP</name>
        <dbReference type="ChEBI" id="CHEBI:30616"/>
    </ligand>
</feature>
<feature type="binding site" evidence="2">
    <location>
        <position position="258"/>
    </location>
    <ligand>
        <name>5-amino-1-(5-phospho-beta-D-ribosyl)imidazole-4-carboxamide</name>
        <dbReference type="ChEBI" id="CHEBI:58475"/>
    </ligand>
</feature>
<feature type="binding site" evidence="2">
    <location>
        <position position="297"/>
    </location>
    <ligand>
        <name>Mg(2+)</name>
        <dbReference type="ChEBI" id="CHEBI:18420"/>
    </ligand>
</feature>
<feature type="binding site" evidence="2">
    <location>
        <position position="310"/>
    </location>
    <ligand>
        <name>Mg(2+)</name>
        <dbReference type="ChEBI" id="CHEBI:18420"/>
    </ligand>
</feature>
<evidence type="ECO:0000250" key="1"/>
<evidence type="ECO:0000255" key="2">
    <source>
        <dbReference type="HAMAP-Rule" id="MF_01163"/>
    </source>
</evidence>
<sequence length="359" mass="40651">MLSREEILEILSEYDLEDLSIATLGSHTALHILKGAKEEGLRSVVVCEEGRTTPYERLGVADEIIVVERFQDMLDEEVQERLRELNAIVVPHGSFVAYVGLDGIENEFCVPMFGNRRLLRWESERSLERKLLKRAGVKVPKVFDSPEDIDRPVIVKFPGARGGRGYFICSDPEEFEEKAERLIEDGVIDEEDLEQAHIEEYVVGTNFCVHYFRSVVEDTVEVLGMDRRYETNIDGLVRMPAGDQLEAGLEPSYVISGNIPVVVRESLLVQLYEMGDRVVRASEDIEEPGFIGPFCLQTLCTEDLEFYVFELSARIDGGTNVTFLPYAYLKFGEIVTMGRRIAKEVREARDKGLLEGVVT</sequence>